<protein>
    <recommendedName>
        <fullName evidence="1">Large ribosomal subunit protein uL24</fullName>
    </recommendedName>
    <alternativeName>
        <fullName evidence="2">50S ribosomal protein L24</fullName>
    </alternativeName>
</protein>
<accession>Q3YRM0</accession>
<gene>
    <name evidence="1" type="primary">rplX</name>
    <name type="ordered locus">Ecaj_0601</name>
</gene>
<organism>
    <name type="scientific">Ehrlichia canis (strain Jake)</name>
    <dbReference type="NCBI Taxonomy" id="269484"/>
    <lineage>
        <taxon>Bacteria</taxon>
        <taxon>Pseudomonadati</taxon>
        <taxon>Pseudomonadota</taxon>
        <taxon>Alphaproteobacteria</taxon>
        <taxon>Rickettsiales</taxon>
        <taxon>Anaplasmataceae</taxon>
        <taxon>Ehrlichia</taxon>
    </lineage>
</organism>
<name>RL24_EHRCJ</name>
<dbReference type="EMBL" id="CP000107">
    <property type="protein sequence ID" value="AAZ68635.1"/>
    <property type="molecule type" value="Genomic_DNA"/>
</dbReference>
<dbReference type="RefSeq" id="WP_011304713.1">
    <property type="nucleotide sequence ID" value="NC_007354.1"/>
</dbReference>
<dbReference type="SMR" id="Q3YRM0"/>
<dbReference type="FunCoup" id="Q3YRM0">
    <property type="interactions" value="349"/>
</dbReference>
<dbReference type="STRING" id="269484.Ecaj_0601"/>
<dbReference type="KEGG" id="ecn:Ecaj_0601"/>
<dbReference type="eggNOG" id="COG0198">
    <property type="taxonomic scope" value="Bacteria"/>
</dbReference>
<dbReference type="HOGENOM" id="CLU_093315_2_2_5"/>
<dbReference type="InParanoid" id="Q3YRM0"/>
<dbReference type="Proteomes" id="UP000000435">
    <property type="component" value="Chromosome"/>
</dbReference>
<dbReference type="GO" id="GO:1990904">
    <property type="term" value="C:ribonucleoprotein complex"/>
    <property type="evidence" value="ECO:0007669"/>
    <property type="project" value="UniProtKB-KW"/>
</dbReference>
<dbReference type="GO" id="GO:0005840">
    <property type="term" value="C:ribosome"/>
    <property type="evidence" value="ECO:0007669"/>
    <property type="project" value="UniProtKB-KW"/>
</dbReference>
<dbReference type="GO" id="GO:0019843">
    <property type="term" value="F:rRNA binding"/>
    <property type="evidence" value="ECO:0007669"/>
    <property type="project" value="UniProtKB-UniRule"/>
</dbReference>
<dbReference type="GO" id="GO:0003735">
    <property type="term" value="F:structural constituent of ribosome"/>
    <property type="evidence" value="ECO:0007669"/>
    <property type="project" value="InterPro"/>
</dbReference>
<dbReference type="GO" id="GO:0006412">
    <property type="term" value="P:translation"/>
    <property type="evidence" value="ECO:0007669"/>
    <property type="project" value="UniProtKB-UniRule"/>
</dbReference>
<dbReference type="CDD" id="cd06089">
    <property type="entry name" value="KOW_RPL26"/>
    <property type="match status" value="1"/>
</dbReference>
<dbReference type="Gene3D" id="2.30.30.30">
    <property type="match status" value="1"/>
</dbReference>
<dbReference type="HAMAP" id="MF_01326_B">
    <property type="entry name" value="Ribosomal_uL24_B"/>
    <property type="match status" value="1"/>
</dbReference>
<dbReference type="InterPro" id="IPR005824">
    <property type="entry name" value="KOW"/>
</dbReference>
<dbReference type="InterPro" id="IPR014722">
    <property type="entry name" value="Rib_uL2_dom2"/>
</dbReference>
<dbReference type="InterPro" id="IPR003256">
    <property type="entry name" value="Ribosomal_uL24"/>
</dbReference>
<dbReference type="InterPro" id="IPR005825">
    <property type="entry name" value="Ribosomal_uL24_CS"/>
</dbReference>
<dbReference type="InterPro" id="IPR041988">
    <property type="entry name" value="Ribosomal_uL24_KOW"/>
</dbReference>
<dbReference type="InterPro" id="IPR008991">
    <property type="entry name" value="Translation_prot_SH3-like_sf"/>
</dbReference>
<dbReference type="NCBIfam" id="TIGR01079">
    <property type="entry name" value="rplX_bact"/>
    <property type="match status" value="1"/>
</dbReference>
<dbReference type="PANTHER" id="PTHR12903">
    <property type="entry name" value="MITOCHONDRIAL RIBOSOMAL PROTEIN L24"/>
    <property type="match status" value="1"/>
</dbReference>
<dbReference type="Pfam" id="PF00467">
    <property type="entry name" value="KOW"/>
    <property type="match status" value="1"/>
</dbReference>
<dbReference type="Pfam" id="PF17136">
    <property type="entry name" value="ribosomal_L24"/>
    <property type="match status" value="1"/>
</dbReference>
<dbReference type="SMART" id="SM00739">
    <property type="entry name" value="KOW"/>
    <property type="match status" value="1"/>
</dbReference>
<dbReference type="SUPFAM" id="SSF50104">
    <property type="entry name" value="Translation proteins SH3-like domain"/>
    <property type="match status" value="1"/>
</dbReference>
<dbReference type="PROSITE" id="PS01108">
    <property type="entry name" value="RIBOSOMAL_L24"/>
    <property type="match status" value="1"/>
</dbReference>
<keyword id="KW-0687">Ribonucleoprotein</keyword>
<keyword id="KW-0689">Ribosomal protein</keyword>
<keyword id="KW-0694">RNA-binding</keyword>
<keyword id="KW-0699">rRNA-binding</keyword>
<feature type="chain" id="PRO_0000241595" description="Large ribosomal subunit protein uL24">
    <location>
        <begin position="1"/>
        <end position="109"/>
    </location>
</feature>
<proteinExistence type="inferred from homology"/>
<sequence>MGMKIVVGDDVVVISGKDKGKMGKVIKVLRKKHFGKDVSFAIVSGVNICKKSVKATQKSDGGIINIAKPINLSNIALFDSTLGIRTRVGYKFIDEKKVRFMKSSGKVIE</sequence>
<evidence type="ECO:0000255" key="1">
    <source>
        <dbReference type="HAMAP-Rule" id="MF_01326"/>
    </source>
</evidence>
<evidence type="ECO:0000305" key="2"/>
<comment type="function">
    <text evidence="1">One of two assembly initiator proteins, it binds directly to the 5'-end of the 23S rRNA, where it nucleates assembly of the 50S subunit.</text>
</comment>
<comment type="function">
    <text evidence="1">One of the proteins that surrounds the polypeptide exit tunnel on the outside of the subunit.</text>
</comment>
<comment type="subunit">
    <text evidence="1">Part of the 50S ribosomal subunit.</text>
</comment>
<comment type="similarity">
    <text evidence="1">Belongs to the universal ribosomal protein uL24 family.</text>
</comment>
<reference key="1">
    <citation type="journal article" date="2006" name="J. Bacteriol.">
        <title>The genome of the obligately intracellular bacterium Ehrlichia canis reveals themes of complex membrane structure and immune evasion strategies.</title>
        <authorList>
            <person name="Mavromatis K."/>
            <person name="Doyle C.K."/>
            <person name="Lykidis A."/>
            <person name="Ivanova N."/>
            <person name="Francino M.P."/>
            <person name="Chain P."/>
            <person name="Shin M."/>
            <person name="Malfatti S."/>
            <person name="Larimer F."/>
            <person name="Copeland A."/>
            <person name="Detter J.C."/>
            <person name="Land M."/>
            <person name="Richardson P.M."/>
            <person name="Yu X.J."/>
            <person name="Walker D.H."/>
            <person name="McBride J.W."/>
            <person name="Kyrpides N.C."/>
        </authorList>
    </citation>
    <scope>NUCLEOTIDE SEQUENCE [LARGE SCALE GENOMIC DNA]</scope>
    <source>
        <strain>Jake</strain>
    </source>
</reference>